<gene>
    <name evidence="1" type="primary">rpmF</name>
    <name type="ordered locus">BCc_215</name>
</gene>
<sequence>MAVQKSKPSRAKRGKRRSHDHVIQHALSIDKLSKEIHIRHHITKKGYYKGKKTLLFHLLSK</sequence>
<reference key="1">
    <citation type="journal article" date="2006" name="Science">
        <title>A small microbial genome: the end of a long symbiotic relationship?</title>
        <authorList>
            <person name="Perez-Brocal V."/>
            <person name="Gil R."/>
            <person name="Ramos S."/>
            <person name="Lamelas A."/>
            <person name="Postigo M."/>
            <person name="Michelena J.M."/>
            <person name="Silva F.J."/>
            <person name="Moya A."/>
            <person name="Latorre A."/>
        </authorList>
    </citation>
    <scope>NUCLEOTIDE SEQUENCE [LARGE SCALE GENOMIC DNA]</scope>
    <source>
        <strain>Cc</strain>
    </source>
</reference>
<name>RL32_BUCCC</name>
<accession>Q057L5</accession>
<evidence type="ECO:0000255" key="1">
    <source>
        <dbReference type="HAMAP-Rule" id="MF_00340"/>
    </source>
</evidence>
<evidence type="ECO:0000256" key="2">
    <source>
        <dbReference type="SAM" id="MobiDB-lite"/>
    </source>
</evidence>
<evidence type="ECO:0000305" key="3"/>
<proteinExistence type="inferred from homology"/>
<keyword id="KW-1185">Reference proteome</keyword>
<keyword id="KW-0687">Ribonucleoprotein</keyword>
<keyword id="KW-0689">Ribosomal protein</keyword>
<dbReference type="EMBL" id="CP000263">
    <property type="protein sequence ID" value="ABJ90684.1"/>
    <property type="molecule type" value="Genomic_DNA"/>
</dbReference>
<dbReference type="RefSeq" id="WP_011672603.1">
    <property type="nucleotide sequence ID" value="NC_008513.1"/>
</dbReference>
<dbReference type="SMR" id="Q057L5"/>
<dbReference type="STRING" id="372461.BCc_215"/>
<dbReference type="KEGG" id="bcc:BCc_215"/>
<dbReference type="eggNOG" id="COG0333">
    <property type="taxonomic scope" value="Bacteria"/>
</dbReference>
<dbReference type="HOGENOM" id="CLU_129084_2_1_6"/>
<dbReference type="OrthoDB" id="9801927at2"/>
<dbReference type="Proteomes" id="UP000000669">
    <property type="component" value="Chromosome"/>
</dbReference>
<dbReference type="GO" id="GO:0015934">
    <property type="term" value="C:large ribosomal subunit"/>
    <property type="evidence" value="ECO:0007669"/>
    <property type="project" value="InterPro"/>
</dbReference>
<dbReference type="GO" id="GO:0003735">
    <property type="term" value="F:structural constituent of ribosome"/>
    <property type="evidence" value="ECO:0007669"/>
    <property type="project" value="InterPro"/>
</dbReference>
<dbReference type="GO" id="GO:0006412">
    <property type="term" value="P:translation"/>
    <property type="evidence" value="ECO:0007669"/>
    <property type="project" value="UniProtKB-UniRule"/>
</dbReference>
<dbReference type="HAMAP" id="MF_00340">
    <property type="entry name" value="Ribosomal_bL32"/>
    <property type="match status" value="1"/>
</dbReference>
<dbReference type="InterPro" id="IPR002677">
    <property type="entry name" value="Ribosomal_bL32"/>
</dbReference>
<dbReference type="InterPro" id="IPR044957">
    <property type="entry name" value="Ribosomal_bL32_bact"/>
</dbReference>
<dbReference type="InterPro" id="IPR011332">
    <property type="entry name" value="Ribosomal_zn-bd"/>
</dbReference>
<dbReference type="NCBIfam" id="TIGR01031">
    <property type="entry name" value="rpmF_bact"/>
    <property type="match status" value="1"/>
</dbReference>
<dbReference type="PANTHER" id="PTHR35534">
    <property type="entry name" value="50S RIBOSOMAL PROTEIN L32"/>
    <property type="match status" value="1"/>
</dbReference>
<dbReference type="PANTHER" id="PTHR35534:SF1">
    <property type="entry name" value="LARGE RIBOSOMAL SUBUNIT PROTEIN BL32"/>
    <property type="match status" value="1"/>
</dbReference>
<dbReference type="Pfam" id="PF01783">
    <property type="entry name" value="Ribosomal_L32p"/>
    <property type="match status" value="1"/>
</dbReference>
<dbReference type="SUPFAM" id="SSF57829">
    <property type="entry name" value="Zn-binding ribosomal proteins"/>
    <property type="match status" value="1"/>
</dbReference>
<comment type="similarity">
    <text evidence="1">Belongs to the bacterial ribosomal protein bL32 family.</text>
</comment>
<protein>
    <recommendedName>
        <fullName evidence="1">Large ribosomal subunit protein bL32</fullName>
    </recommendedName>
    <alternativeName>
        <fullName evidence="3">50S ribosomal protein L32</fullName>
    </alternativeName>
</protein>
<feature type="chain" id="PRO_0000296434" description="Large ribosomal subunit protein bL32">
    <location>
        <begin position="1"/>
        <end position="61"/>
    </location>
</feature>
<feature type="region of interest" description="Disordered" evidence="2">
    <location>
        <begin position="1"/>
        <end position="20"/>
    </location>
</feature>
<feature type="compositionally biased region" description="Basic residues" evidence="2">
    <location>
        <begin position="7"/>
        <end position="19"/>
    </location>
</feature>
<organism>
    <name type="scientific">Buchnera aphidicola subsp. Cinara cedri (strain Cc)</name>
    <dbReference type="NCBI Taxonomy" id="372461"/>
    <lineage>
        <taxon>Bacteria</taxon>
        <taxon>Pseudomonadati</taxon>
        <taxon>Pseudomonadota</taxon>
        <taxon>Gammaproteobacteria</taxon>
        <taxon>Enterobacterales</taxon>
        <taxon>Erwiniaceae</taxon>
        <taxon>Buchnera</taxon>
    </lineage>
</organism>